<reference key="1">
    <citation type="submission" date="2007-06" db="EMBL/GenBank/DDBJ databases">
        <authorList>
            <person name="Dodson R.J."/>
            <person name="Harkins D."/>
            <person name="Paulsen I.T."/>
        </authorList>
    </citation>
    <scope>NUCLEOTIDE SEQUENCE [LARGE SCALE GENOMIC DNA]</scope>
    <source>
        <strain>DSM 24068 / PA7</strain>
    </source>
</reference>
<keyword id="KW-0030">Aminoacyl-tRNA synthetase</keyword>
<keyword id="KW-0067">ATP-binding</keyword>
<keyword id="KW-0963">Cytoplasm</keyword>
<keyword id="KW-0436">Ligase</keyword>
<keyword id="KW-0547">Nucleotide-binding</keyword>
<keyword id="KW-0648">Protein biosynthesis</keyword>
<protein>
    <recommendedName>
        <fullName evidence="1">Arginine--tRNA ligase</fullName>
        <ecNumber evidence="1">6.1.1.19</ecNumber>
    </recommendedName>
    <alternativeName>
        <fullName evidence="1">Arginyl-tRNA synthetase</fullName>
        <shortName evidence="1">ArgRS</shortName>
    </alternativeName>
</protein>
<dbReference type="EC" id="6.1.1.19" evidence="1"/>
<dbReference type="EMBL" id="CP000744">
    <property type="protein sequence ID" value="ABR86159.1"/>
    <property type="molecule type" value="Genomic_DNA"/>
</dbReference>
<dbReference type="RefSeq" id="WP_003156914.1">
    <property type="nucleotide sequence ID" value="NC_009656.1"/>
</dbReference>
<dbReference type="SMR" id="A6VDH2"/>
<dbReference type="KEGG" id="pap:PSPA7_5788"/>
<dbReference type="HOGENOM" id="CLU_006406_5_1_6"/>
<dbReference type="Proteomes" id="UP000001582">
    <property type="component" value="Chromosome"/>
</dbReference>
<dbReference type="GO" id="GO:0005737">
    <property type="term" value="C:cytoplasm"/>
    <property type="evidence" value="ECO:0007669"/>
    <property type="project" value="UniProtKB-SubCell"/>
</dbReference>
<dbReference type="GO" id="GO:0004814">
    <property type="term" value="F:arginine-tRNA ligase activity"/>
    <property type="evidence" value="ECO:0007669"/>
    <property type="project" value="UniProtKB-UniRule"/>
</dbReference>
<dbReference type="GO" id="GO:0005524">
    <property type="term" value="F:ATP binding"/>
    <property type="evidence" value="ECO:0007669"/>
    <property type="project" value="UniProtKB-UniRule"/>
</dbReference>
<dbReference type="GO" id="GO:0006420">
    <property type="term" value="P:arginyl-tRNA aminoacylation"/>
    <property type="evidence" value="ECO:0007669"/>
    <property type="project" value="UniProtKB-UniRule"/>
</dbReference>
<dbReference type="CDD" id="cd00671">
    <property type="entry name" value="ArgRS_core"/>
    <property type="match status" value="1"/>
</dbReference>
<dbReference type="FunFam" id="1.10.730.10:FF:000001">
    <property type="entry name" value="Arginine--tRNA ligase"/>
    <property type="match status" value="1"/>
</dbReference>
<dbReference type="FunFam" id="3.30.1360.70:FF:000003">
    <property type="entry name" value="Arginine--tRNA ligase"/>
    <property type="match status" value="1"/>
</dbReference>
<dbReference type="FunFam" id="3.40.50.620:FF:000030">
    <property type="entry name" value="Arginine--tRNA ligase"/>
    <property type="match status" value="1"/>
</dbReference>
<dbReference type="Gene3D" id="3.30.1360.70">
    <property type="entry name" value="Arginyl tRNA synthetase N-terminal domain"/>
    <property type="match status" value="1"/>
</dbReference>
<dbReference type="Gene3D" id="3.40.50.620">
    <property type="entry name" value="HUPs"/>
    <property type="match status" value="1"/>
</dbReference>
<dbReference type="Gene3D" id="1.10.730.10">
    <property type="entry name" value="Isoleucyl-tRNA Synthetase, Domain 1"/>
    <property type="match status" value="1"/>
</dbReference>
<dbReference type="HAMAP" id="MF_00123">
    <property type="entry name" value="Arg_tRNA_synth"/>
    <property type="match status" value="1"/>
</dbReference>
<dbReference type="InterPro" id="IPR001412">
    <property type="entry name" value="aa-tRNA-synth_I_CS"/>
</dbReference>
<dbReference type="InterPro" id="IPR001278">
    <property type="entry name" value="Arg-tRNA-ligase"/>
</dbReference>
<dbReference type="InterPro" id="IPR005148">
    <property type="entry name" value="Arg-tRNA-synth_N"/>
</dbReference>
<dbReference type="InterPro" id="IPR036695">
    <property type="entry name" value="Arg-tRNA-synth_N_sf"/>
</dbReference>
<dbReference type="InterPro" id="IPR035684">
    <property type="entry name" value="ArgRS_core"/>
</dbReference>
<dbReference type="InterPro" id="IPR008909">
    <property type="entry name" value="DALR_anticod-bd"/>
</dbReference>
<dbReference type="InterPro" id="IPR014729">
    <property type="entry name" value="Rossmann-like_a/b/a_fold"/>
</dbReference>
<dbReference type="InterPro" id="IPR009080">
    <property type="entry name" value="tRNAsynth_Ia_anticodon-bd"/>
</dbReference>
<dbReference type="NCBIfam" id="TIGR00456">
    <property type="entry name" value="argS"/>
    <property type="match status" value="1"/>
</dbReference>
<dbReference type="PANTHER" id="PTHR11956:SF5">
    <property type="entry name" value="ARGININE--TRNA LIGASE, CYTOPLASMIC"/>
    <property type="match status" value="1"/>
</dbReference>
<dbReference type="PANTHER" id="PTHR11956">
    <property type="entry name" value="ARGINYL-TRNA SYNTHETASE"/>
    <property type="match status" value="1"/>
</dbReference>
<dbReference type="Pfam" id="PF03485">
    <property type="entry name" value="Arg_tRNA_synt_N"/>
    <property type="match status" value="1"/>
</dbReference>
<dbReference type="Pfam" id="PF05746">
    <property type="entry name" value="DALR_1"/>
    <property type="match status" value="1"/>
</dbReference>
<dbReference type="Pfam" id="PF00750">
    <property type="entry name" value="tRNA-synt_1d"/>
    <property type="match status" value="1"/>
</dbReference>
<dbReference type="PRINTS" id="PR01038">
    <property type="entry name" value="TRNASYNTHARG"/>
</dbReference>
<dbReference type="SMART" id="SM01016">
    <property type="entry name" value="Arg_tRNA_synt_N"/>
    <property type="match status" value="1"/>
</dbReference>
<dbReference type="SMART" id="SM00836">
    <property type="entry name" value="DALR_1"/>
    <property type="match status" value="1"/>
</dbReference>
<dbReference type="SUPFAM" id="SSF47323">
    <property type="entry name" value="Anticodon-binding domain of a subclass of class I aminoacyl-tRNA synthetases"/>
    <property type="match status" value="1"/>
</dbReference>
<dbReference type="SUPFAM" id="SSF55190">
    <property type="entry name" value="Arginyl-tRNA synthetase (ArgRS), N-terminal 'additional' domain"/>
    <property type="match status" value="1"/>
</dbReference>
<dbReference type="SUPFAM" id="SSF52374">
    <property type="entry name" value="Nucleotidylyl transferase"/>
    <property type="match status" value="1"/>
</dbReference>
<dbReference type="PROSITE" id="PS00178">
    <property type="entry name" value="AA_TRNA_LIGASE_I"/>
    <property type="match status" value="1"/>
</dbReference>
<evidence type="ECO:0000255" key="1">
    <source>
        <dbReference type="HAMAP-Rule" id="MF_00123"/>
    </source>
</evidence>
<name>SYR_PSEP7</name>
<organism>
    <name type="scientific">Pseudomonas paraeruginosa (strain DSM 24068 / PA7)</name>
    <name type="common">Pseudomonas aeruginosa (strain PA7)</name>
    <dbReference type="NCBI Taxonomy" id="381754"/>
    <lineage>
        <taxon>Bacteria</taxon>
        <taxon>Pseudomonadati</taxon>
        <taxon>Pseudomonadota</taxon>
        <taxon>Gammaproteobacteria</taxon>
        <taxon>Pseudomonadales</taxon>
        <taxon>Pseudomonadaceae</taxon>
        <taxon>Pseudomonas</taxon>
        <taxon>Pseudomonas paraeruginosa</taxon>
    </lineage>
</organism>
<proteinExistence type="inferred from homology"/>
<gene>
    <name evidence="1" type="primary">argS</name>
    <name type="ordered locus">PSPA7_5788</name>
</gene>
<sequence>MKDTIRQLIQQALDQLTADGTLPAGLTPDIQVENTKDRSHGDFASNIAMMLAKPAGMKPRDLATRLVEALPAHEQLAKVEIAGPGFLNFFQDHIWLAASLDRALADERLGVRKAGPAQRVVIDLSSPNLAKEMHVGHLRSTIIGDAVARVLEFLGDTVIRQNHVGDWGTQFGMLLAYLEEQPVDAQAELHDLEVFYRAAKKRFDESPEFADRARELVVRLQAGDPDCLRLWTRFNEISLSHCQKVYDRLGVKLSMADVKGESAYNDDLAQVVADLTAKGLLTEDNGALCVFLEEFRNAEGNPLPVIVQKAGGGYLYATTDLAAMRYRHNVLHADRALYFVDQRQALHFQQVFEVARRAGFVPADMELEHMGFGTMNGADGRPFKTRDGGTVKLIDLLEEAESRAYALVKERNEQRVERGEEPFDEAQLREIGRVVGIDSVKYADLSKHRTSDYSFNFELMLSFEGNTAPYLLYACTRVASVFRKLGQGREQLGGRIVLEQPQELALAAQLAQFGDLLNNVALKGVPHLLCAYLYELAGLFSSFYEHCPILTAEDPAQKDSRLRLAALTGRTLEQGLELLGLKTLERM</sequence>
<accession>A6VDH2</accession>
<feature type="chain" id="PRO_1000018090" description="Arginine--tRNA ligase">
    <location>
        <begin position="1"/>
        <end position="587"/>
    </location>
</feature>
<feature type="short sequence motif" description="'HIGH' region">
    <location>
        <begin position="127"/>
        <end position="137"/>
    </location>
</feature>
<comment type="catalytic activity">
    <reaction evidence="1">
        <text>tRNA(Arg) + L-arginine + ATP = L-arginyl-tRNA(Arg) + AMP + diphosphate</text>
        <dbReference type="Rhea" id="RHEA:20301"/>
        <dbReference type="Rhea" id="RHEA-COMP:9658"/>
        <dbReference type="Rhea" id="RHEA-COMP:9673"/>
        <dbReference type="ChEBI" id="CHEBI:30616"/>
        <dbReference type="ChEBI" id="CHEBI:32682"/>
        <dbReference type="ChEBI" id="CHEBI:33019"/>
        <dbReference type="ChEBI" id="CHEBI:78442"/>
        <dbReference type="ChEBI" id="CHEBI:78513"/>
        <dbReference type="ChEBI" id="CHEBI:456215"/>
        <dbReference type="EC" id="6.1.1.19"/>
    </reaction>
</comment>
<comment type="subunit">
    <text evidence="1">Monomer.</text>
</comment>
<comment type="subcellular location">
    <subcellularLocation>
        <location evidence="1">Cytoplasm</location>
    </subcellularLocation>
</comment>
<comment type="similarity">
    <text evidence="1">Belongs to the class-I aminoacyl-tRNA synthetase family.</text>
</comment>